<sequence>MTTTTPDLTIVRAGTLGYEAAWEEQRRLHESVVADERGDAVLLLEHPSVYTAGKRTEPWDRPMDGTPVIDVDRGGKITWHGPGQLVGYPILRLPNPVDVVAYVRRVEQMLIDVCAEFGLVAGRIEGRSGVWVPADDRGPARKVAAIGIRVARGVTLHGFSLNCDCDLTYYDRIVPCGISDAGVTSLAAELGRPVTVADALPVVERHLPTLIEP</sequence>
<organism>
    <name type="scientific">Salinispora tropica (strain ATCC BAA-916 / DSM 44818 / JCM 13857 / NBRC 105044 / CNB-440)</name>
    <dbReference type="NCBI Taxonomy" id="369723"/>
    <lineage>
        <taxon>Bacteria</taxon>
        <taxon>Bacillati</taxon>
        <taxon>Actinomycetota</taxon>
        <taxon>Actinomycetes</taxon>
        <taxon>Micromonosporales</taxon>
        <taxon>Micromonosporaceae</taxon>
        <taxon>Salinispora</taxon>
    </lineage>
</organism>
<name>LIPB_SALTO</name>
<dbReference type="EC" id="2.3.1.181" evidence="1"/>
<dbReference type="EMBL" id="CP000667">
    <property type="protein sequence ID" value="ABP55760.1"/>
    <property type="molecule type" value="Genomic_DNA"/>
</dbReference>
<dbReference type="RefSeq" id="WP_012014537.1">
    <property type="nucleotide sequence ID" value="NC_009380.1"/>
</dbReference>
<dbReference type="SMR" id="A4XA20"/>
<dbReference type="STRING" id="369723.Strop_3326"/>
<dbReference type="KEGG" id="stp:Strop_3326"/>
<dbReference type="PATRIC" id="fig|369723.5.peg.3428"/>
<dbReference type="eggNOG" id="COG0321">
    <property type="taxonomic scope" value="Bacteria"/>
</dbReference>
<dbReference type="HOGENOM" id="CLU_035168_2_1_11"/>
<dbReference type="UniPathway" id="UPA00538">
    <property type="reaction ID" value="UER00592"/>
</dbReference>
<dbReference type="Proteomes" id="UP000000235">
    <property type="component" value="Chromosome"/>
</dbReference>
<dbReference type="GO" id="GO:0005737">
    <property type="term" value="C:cytoplasm"/>
    <property type="evidence" value="ECO:0007669"/>
    <property type="project" value="UniProtKB-SubCell"/>
</dbReference>
<dbReference type="GO" id="GO:0033819">
    <property type="term" value="F:lipoyl(octanoyl) transferase activity"/>
    <property type="evidence" value="ECO:0007669"/>
    <property type="project" value="UniProtKB-EC"/>
</dbReference>
<dbReference type="GO" id="GO:0036211">
    <property type="term" value="P:protein modification process"/>
    <property type="evidence" value="ECO:0007669"/>
    <property type="project" value="InterPro"/>
</dbReference>
<dbReference type="CDD" id="cd16444">
    <property type="entry name" value="LipB"/>
    <property type="match status" value="1"/>
</dbReference>
<dbReference type="FunFam" id="3.30.930.10:FF:000035">
    <property type="entry name" value="Putative lipoyltransferase 2, mitochondrial"/>
    <property type="match status" value="1"/>
</dbReference>
<dbReference type="Gene3D" id="3.30.930.10">
    <property type="entry name" value="Bira Bifunctional Protein, Domain 2"/>
    <property type="match status" value="1"/>
</dbReference>
<dbReference type="HAMAP" id="MF_00013">
    <property type="entry name" value="LipB"/>
    <property type="match status" value="1"/>
</dbReference>
<dbReference type="InterPro" id="IPR045864">
    <property type="entry name" value="aa-tRNA-synth_II/BPL/LPL"/>
</dbReference>
<dbReference type="InterPro" id="IPR004143">
    <property type="entry name" value="BPL_LPL_catalytic"/>
</dbReference>
<dbReference type="InterPro" id="IPR000544">
    <property type="entry name" value="Octanoyltransferase"/>
</dbReference>
<dbReference type="InterPro" id="IPR020605">
    <property type="entry name" value="Octanoyltransferase_CS"/>
</dbReference>
<dbReference type="NCBIfam" id="TIGR00214">
    <property type="entry name" value="lipB"/>
    <property type="match status" value="1"/>
</dbReference>
<dbReference type="NCBIfam" id="NF010925">
    <property type="entry name" value="PRK14345.1"/>
    <property type="match status" value="1"/>
</dbReference>
<dbReference type="PANTHER" id="PTHR10993:SF7">
    <property type="entry name" value="LIPOYLTRANSFERASE 2, MITOCHONDRIAL-RELATED"/>
    <property type="match status" value="1"/>
</dbReference>
<dbReference type="PANTHER" id="PTHR10993">
    <property type="entry name" value="OCTANOYLTRANSFERASE"/>
    <property type="match status" value="1"/>
</dbReference>
<dbReference type="Pfam" id="PF21948">
    <property type="entry name" value="LplA-B_cat"/>
    <property type="match status" value="1"/>
</dbReference>
<dbReference type="PIRSF" id="PIRSF016262">
    <property type="entry name" value="LPLase"/>
    <property type="match status" value="1"/>
</dbReference>
<dbReference type="SUPFAM" id="SSF55681">
    <property type="entry name" value="Class II aaRS and biotin synthetases"/>
    <property type="match status" value="1"/>
</dbReference>
<dbReference type="PROSITE" id="PS51733">
    <property type="entry name" value="BPL_LPL_CATALYTIC"/>
    <property type="match status" value="1"/>
</dbReference>
<dbReference type="PROSITE" id="PS01313">
    <property type="entry name" value="LIPB"/>
    <property type="match status" value="1"/>
</dbReference>
<feature type="chain" id="PRO_1000074013" description="Octanoyltransferase">
    <location>
        <begin position="1"/>
        <end position="213"/>
    </location>
</feature>
<feature type="domain" description="BPL/LPL catalytic" evidence="2">
    <location>
        <begin position="35"/>
        <end position="213"/>
    </location>
</feature>
<feature type="active site" description="Acyl-thioester intermediate" evidence="1">
    <location>
        <position position="176"/>
    </location>
</feature>
<feature type="binding site" evidence="1">
    <location>
        <begin position="73"/>
        <end position="80"/>
    </location>
    <ligand>
        <name>substrate</name>
    </ligand>
</feature>
<feature type="binding site" evidence="1">
    <location>
        <begin position="145"/>
        <end position="147"/>
    </location>
    <ligand>
        <name>substrate</name>
    </ligand>
</feature>
<feature type="binding site" evidence="1">
    <location>
        <begin position="158"/>
        <end position="160"/>
    </location>
    <ligand>
        <name>substrate</name>
    </ligand>
</feature>
<feature type="site" description="Lowers pKa of active site Cys" evidence="1">
    <location>
        <position position="142"/>
    </location>
</feature>
<gene>
    <name evidence="1" type="primary">lipB</name>
    <name type="ordered locus">Strop_3326</name>
</gene>
<keyword id="KW-0012">Acyltransferase</keyword>
<keyword id="KW-0963">Cytoplasm</keyword>
<keyword id="KW-1185">Reference proteome</keyword>
<keyword id="KW-0808">Transferase</keyword>
<reference key="1">
    <citation type="journal article" date="2007" name="Proc. Natl. Acad. Sci. U.S.A.">
        <title>Genome sequencing reveals complex secondary metabolome in the marine actinomycete Salinispora tropica.</title>
        <authorList>
            <person name="Udwary D.W."/>
            <person name="Zeigler L."/>
            <person name="Asolkar R.N."/>
            <person name="Singan V."/>
            <person name="Lapidus A."/>
            <person name="Fenical W."/>
            <person name="Jensen P.R."/>
            <person name="Moore B.S."/>
        </authorList>
    </citation>
    <scope>NUCLEOTIDE SEQUENCE [LARGE SCALE GENOMIC DNA]</scope>
    <source>
        <strain>ATCC BAA-916 / DSM 44818 / JCM 13857 / NBRC 105044 / CNB-440</strain>
    </source>
</reference>
<evidence type="ECO:0000255" key="1">
    <source>
        <dbReference type="HAMAP-Rule" id="MF_00013"/>
    </source>
</evidence>
<evidence type="ECO:0000255" key="2">
    <source>
        <dbReference type="PROSITE-ProRule" id="PRU01067"/>
    </source>
</evidence>
<proteinExistence type="inferred from homology"/>
<accession>A4XA20</accession>
<protein>
    <recommendedName>
        <fullName evidence="1">Octanoyltransferase</fullName>
        <ecNumber evidence="1">2.3.1.181</ecNumber>
    </recommendedName>
    <alternativeName>
        <fullName evidence="1">Lipoate-protein ligase B</fullName>
    </alternativeName>
    <alternativeName>
        <fullName evidence="1">Lipoyl/octanoyl transferase</fullName>
    </alternativeName>
    <alternativeName>
        <fullName evidence="1">Octanoyl-[acyl-carrier-protein]-protein N-octanoyltransferase</fullName>
    </alternativeName>
</protein>
<comment type="function">
    <text evidence="1">Catalyzes the transfer of endogenously produced octanoic acid from octanoyl-acyl-carrier-protein onto the lipoyl domains of lipoate-dependent enzymes. Lipoyl-ACP can also act as a substrate although octanoyl-ACP is likely to be the physiological substrate.</text>
</comment>
<comment type="catalytic activity">
    <reaction evidence="1">
        <text>octanoyl-[ACP] + L-lysyl-[protein] = N(6)-octanoyl-L-lysyl-[protein] + holo-[ACP] + H(+)</text>
        <dbReference type="Rhea" id="RHEA:17665"/>
        <dbReference type="Rhea" id="RHEA-COMP:9636"/>
        <dbReference type="Rhea" id="RHEA-COMP:9685"/>
        <dbReference type="Rhea" id="RHEA-COMP:9752"/>
        <dbReference type="Rhea" id="RHEA-COMP:9928"/>
        <dbReference type="ChEBI" id="CHEBI:15378"/>
        <dbReference type="ChEBI" id="CHEBI:29969"/>
        <dbReference type="ChEBI" id="CHEBI:64479"/>
        <dbReference type="ChEBI" id="CHEBI:78463"/>
        <dbReference type="ChEBI" id="CHEBI:78809"/>
        <dbReference type="EC" id="2.3.1.181"/>
    </reaction>
</comment>
<comment type="pathway">
    <text evidence="1">Protein modification; protein lipoylation via endogenous pathway; protein N(6)-(lipoyl)lysine from octanoyl-[acyl-carrier-protein]: step 1/2.</text>
</comment>
<comment type="subcellular location">
    <subcellularLocation>
        <location evidence="1">Cytoplasm</location>
    </subcellularLocation>
</comment>
<comment type="miscellaneous">
    <text evidence="1">In the reaction, the free carboxyl group of octanoic acid is attached via an amide linkage to the epsilon-amino group of a specific lysine residue of lipoyl domains of lipoate-dependent enzymes.</text>
</comment>
<comment type="similarity">
    <text evidence="1">Belongs to the LipB family.</text>
</comment>